<comment type="function">
    <text evidence="1">Part of a membrane-bound complex that couples electron transfer with translocation of ions across the membrane. Required to maintain the reduced state of SoxR.</text>
</comment>
<comment type="cofactor">
    <cofactor evidence="1">
        <name>[4Fe-4S] cluster</name>
        <dbReference type="ChEBI" id="CHEBI:49883"/>
    </cofactor>
    <text evidence="1">Binds 2 [4Fe-4S] clusters per subunit.</text>
</comment>
<comment type="subunit">
    <text evidence="1">The complex is composed of six subunits: RsxA, RsxB, RsxC, RsxD, RsxE and RsxG.</text>
</comment>
<comment type="subcellular location">
    <subcellularLocation>
        <location evidence="1">Cell inner membrane</location>
        <topology evidence="1">Peripheral membrane protein</topology>
    </subcellularLocation>
</comment>
<comment type="similarity">
    <text evidence="1">Belongs to the 4Fe4S bacterial-type ferredoxin family. RnfC subfamily.</text>
</comment>
<feature type="chain" id="PRO_1000081142" description="Ion-translocating oxidoreductase complex subunit C">
    <location>
        <begin position="1"/>
        <end position="673"/>
    </location>
</feature>
<feature type="domain" description="4Fe-4S ferredoxin-type 1" evidence="1">
    <location>
        <begin position="368"/>
        <end position="397"/>
    </location>
</feature>
<feature type="domain" description="4Fe-4S ferredoxin-type 2" evidence="1">
    <location>
        <begin position="407"/>
        <end position="436"/>
    </location>
</feature>
<feature type="region of interest" description="Disordered" evidence="2">
    <location>
        <begin position="529"/>
        <end position="554"/>
    </location>
</feature>
<feature type="binding site" evidence="1">
    <location>
        <position position="377"/>
    </location>
    <ligand>
        <name>[4Fe-4S] cluster</name>
        <dbReference type="ChEBI" id="CHEBI:49883"/>
        <label>1</label>
    </ligand>
</feature>
<feature type="binding site" evidence="1">
    <location>
        <position position="380"/>
    </location>
    <ligand>
        <name>[4Fe-4S] cluster</name>
        <dbReference type="ChEBI" id="CHEBI:49883"/>
        <label>1</label>
    </ligand>
</feature>
<feature type="binding site" evidence="1">
    <location>
        <position position="383"/>
    </location>
    <ligand>
        <name>[4Fe-4S] cluster</name>
        <dbReference type="ChEBI" id="CHEBI:49883"/>
        <label>1</label>
    </ligand>
</feature>
<feature type="binding site" evidence="1">
    <location>
        <position position="387"/>
    </location>
    <ligand>
        <name>[4Fe-4S] cluster</name>
        <dbReference type="ChEBI" id="CHEBI:49883"/>
        <label>2</label>
    </ligand>
</feature>
<feature type="binding site" evidence="1">
    <location>
        <position position="416"/>
    </location>
    <ligand>
        <name>[4Fe-4S] cluster</name>
        <dbReference type="ChEBI" id="CHEBI:49883"/>
        <label>2</label>
    </ligand>
</feature>
<feature type="binding site" evidence="1">
    <location>
        <position position="419"/>
    </location>
    <ligand>
        <name>[4Fe-4S] cluster</name>
        <dbReference type="ChEBI" id="CHEBI:49883"/>
        <label>2</label>
    </ligand>
</feature>
<feature type="binding site" evidence="1">
    <location>
        <position position="422"/>
    </location>
    <ligand>
        <name>[4Fe-4S] cluster</name>
        <dbReference type="ChEBI" id="CHEBI:49883"/>
        <label>2</label>
    </ligand>
</feature>
<feature type="binding site" evidence="1">
    <location>
        <position position="426"/>
    </location>
    <ligand>
        <name>[4Fe-4S] cluster</name>
        <dbReference type="ChEBI" id="CHEBI:49883"/>
        <label>1</label>
    </ligand>
</feature>
<reference key="1">
    <citation type="submission" date="2007-11" db="EMBL/GenBank/DDBJ databases">
        <authorList>
            <consortium name="The Salmonella enterica serovar Arizonae Genome Sequencing Project"/>
            <person name="McClelland M."/>
            <person name="Sanderson E.K."/>
            <person name="Porwollik S."/>
            <person name="Spieth J."/>
            <person name="Clifton W.S."/>
            <person name="Fulton R."/>
            <person name="Chunyan W."/>
            <person name="Wollam A."/>
            <person name="Shah N."/>
            <person name="Pepin K."/>
            <person name="Bhonagiri V."/>
            <person name="Nash W."/>
            <person name="Johnson M."/>
            <person name="Thiruvilangam P."/>
            <person name="Wilson R."/>
        </authorList>
    </citation>
    <scope>NUCLEOTIDE SEQUENCE [LARGE SCALE GENOMIC DNA]</scope>
    <source>
        <strain>ATCC BAA-731 / CDC346-86 / RSK2980</strain>
    </source>
</reference>
<protein>
    <recommendedName>
        <fullName evidence="1">Ion-translocating oxidoreductase complex subunit C</fullName>
        <ecNumber evidence="1">7.-.-.-</ecNumber>
    </recommendedName>
    <alternativeName>
        <fullName evidence="1">Rsx electron transport complex subunit C</fullName>
    </alternativeName>
</protein>
<keyword id="KW-0004">4Fe-4S</keyword>
<keyword id="KW-0997">Cell inner membrane</keyword>
<keyword id="KW-1003">Cell membrane</keyword>
<keyword id="KW-0249">Electron transport</keyword>
<keyword id="KW-0408">Iron</keyword>
<keyword id="KW-0411">Iron-sulfur</keyword>
<keyword id="KW-0472">Membrane</keyword>
<keyword id="KW-0479">Metal-binding</keyword>
<keyword id="KW-1185">Reference proteome</keyword>
<keyword id="KW-0677">Repeat</keyword>
<keyword id="KW-1278">Translocase</keyword>
<keyword id="KW-0813">Transport</keyword>
<organism>
    <name type="scientific">Salmonella arizonae (strain ATCC BAA-731 / CDC346-86 / RSK2980)</name>
    <dbReference type="NCBI Taxonomy" id="41514"/>
    <lineage>
        <taxon>Bacteria</taxon>
        <taxon>Pseudomonadati</taxon>
        <taxon>Pseudomonadota</taxon>
        <taxon>Gammaproteobacteria</taxon>
        <taxon>Enterobacterales</taxon>
        <taxon>Enterobacteriaceae</taxon>
        <taxon>Salmonella</taxon>
    </lineage>
</organism>
<accession>A9MRW8</accession>
<sequence length="673" mass="72206">MLKLFSAFRKDKIWDFDGGIHPPEMKTQSNGTPLRQIPLAPRFVIPLKQHIGAEGELCVSVGDRVLRGQALTHGRGKMLPVHAPTSGTVIAVAPHSTAHPSALAELSVIIDADGEDRWIEREGWSDYRAHSREALIERIHQYGVAGLGGAGFPTGVKLQGGIDKITTLIINAAECEPYITADDRLMQDCAAQIVEGIRILAYILQPREVLIGIEDNKPQAISMLRAVLADAHDISLRVIPTKYPSGGAKQLTQILTGKQVPHGGRSSDIGVLMQNVGTAYAVKRAVVDGEPITERVVTLTGEAVSRPGNIWARLGTPVRHLLNNAGFCPSADQMVIMGGPLMGFTLPWLDVPVVKITNCLLAPSATEMGAPQEETSCIRCSACADACPADLLPQQLYWFSKGQQHDKATAHHIADCIECGACAWVCPSNIPLVQYFRQEKAEINAIRLEEKRAAEAKARFEARQARLEREKAARLARHKSAAVQPAAKDQDAIAAALARVKEKQAQATQPVIIQAGSLPDNSAAIAAREARKAQARAKQAGHPMADSATSGDDPRKAAVEAAVARAKARKQEQQAISEAAEPVDPRKAAVEAAIARAKARKQEQQAVSEAAEPVDPRKAAVEAAIARAKARKQEQQAVSVPVEPVDPRKAAVAAAIARVQAKKAAQQQVVNEE</sequence>
<gene>
    <name evidence="1" type="primary">rsxC</name>
    <name type="ordered locus">SARI_01525</name>
</gene>
<name>RSXC_SALAR</name>
<dbReference type="EC" id="7.-.-.-" evidence="1"/>
<dbReference type="EMBL" id="CP000880">
    <property type="protein sequence ID" value="ABX21421.1"/>
    <property type="molecule type" value="Genomic_DNA"/>
</dbReference>
<dbReference type="SMR" id="A9MRW8"/>
<dbReference type="STRING" id="41514.SARI_01525"/>
<dbReference type="KEGG" id="ses:SARI_01525"/>
<dbReference type="HOGENOM" id="CLU_010808_2_1_6"/>
<dbReference type="Proteomes" id="UP000002084">
    <property type="component" value="Chromosome"/>
</dbReference>
<dbReference type="GO" id="GO:0005886">
    <property type="term" value="C:plasma membrane"/>
    <property type="evidence" value="ECO:0007669"/>
    <property type="project" value="UniProtKB-SubCell"/>
</dbReference>
<dbReference type="GO" id="GO:0051539">
    <property type="term" value="F:4 iron, 4 sulfur cluster binding"/>
    <property type="evidence" value="ECO:0007669"/>
    <property type="project" value="UniProtKB-KW"/>
</dbReference>
<dbReference type="GO" id="GO:0009055">
    <property type="term" value="F:electron transfer activity"/>
    <property type="evidence" value="ECO:0007669"/>
    <property type="project" value="InterPro"/>
</dbReference>
<dbReference type="GO" id="GO:0046872">
    <property type="term" value="F:metal ion binding"/>
    <property type="evidence" value="ECO:0007669"/>
    <property type="project" value="UniProtKB-KW"/>
</dbReference>
<dbReference type="GO" id="GO:0022900">
    <property type="term" value="P:electron transport chain"/>
    <property type="evidence" value="ECO:0007669"/>
    <property type="project" value="UniProtKB-UniRule"/>
</dbReference>
<dbReference type="Gene3D" id="3.30.70.20">
    <property type="match status" value="1"/>
</dbReference>
<dbReference type="Gene3D" id="3.40.50.11540">
    <property type="entry name" value="NADH-ubiquinone oxidoreductase 51kDa subunit"/>
    <property type="match status" value="1"/>
</dbReference>
<dbReference type="HAMAP" id="MF_00461">
    <property type="entry name" value="RsxC_RnfC"/>
    <property type="match status" value="1"/>
</dbReference>
<dbReference type="InterPro" id="IPR017896">
    <property type="entry name" value="4Fe4S_Fe-S-bd"/>
</dbReference>
<dbReference type="InterPro" id="IPR017900">
    <property type="entry name" value="4Fe4S_Fe_S_CS"/>
</dbReference>
<dbReference type="InterPro" id="IPR010208">
    <property type="entry name" value="Ion_transpt_RnfC/RsxC"/>
</dbReference>
<dbReference type="InterPro" id="IPR011538">
    <property type="entry name" value="Nuo51_FMN-bd"/>
</dbReference>
<dbReference type="InterPro" id="IPR037225">
    <property type="entry name" value="Nuo51_FMN-bd_sf"/>
</dbReference>
<dbReference type="InterPro" id="IPR026902">
    <property type="entry name" value="RnfC_N"/>
</dbReference>
<dbReference type="InterPro" id="IPR019554">
    <property type="entry name" value="Soluble_ligand-bd"/>
</dbReference>
<dbReference type="NCBIfam" id="NF003454">
    <property type="entry name" value="PRK05035.1"/>
    <property type="match status" value="1"/>
</dbReference>
<dbReference type="NCBIfam" id="TIGR01945">
    <property type="entry name" value="rnfC"/>
    <property type="match status" value="1"/>
</dbReference>
<dbReference type="PANTHER" id="PTHR43034">
    <property type="entry name" value="ION-TRANSLOCATING OXIDOREDUCTASE COMPLEX SUBUNIT C"/>
    <property type="match status" value="1"/>
</dbReference>
<dbReference type="PANTHER" id="PTHR43034:SF2">
    <property type="entry name" value="ION-TRANSLOCATING OXIDOREDUCTASE COMPLEX SUBUNIT C"/>
    <property type="match status" value="1"/>
</dbReference>
<dbReference type="Pfam" id="PF01512">
    <property type="entry name" value="Complex1_51K"/>
    <property type="match status" value="1"/>
</dbReference>
<dbReference type="Pfam" id="PF12838">
    <property type="entry name" value="Fer4_7"/>
    <property type="match status" value="1"/>
</dbReference>
<dbReference type="Pfam" id="PF13375">
    <property type="entry name" value="RnfC_N"/>
    <property type="match status" value="1"/>
</dbReference>
<dbReference type="Pfam" id="PF10531">
    <property type="entry name" value="SLBB"/>
    <property type="match status" value="1"/>
</dbReference>
<dbReference type="SUPFAM" id="SSF46548">
    <property type="entry name" value="alpha-helical ferredoxin"/>
    <property type="match status" value="1"/>
</dbReference>
<dbReference type="SUPFAM" id="SSF142019">
    <property type="entry name" value="Nqo1 FMN-binding domain-like"/>
    <property type="match status" value="1"/>
</dbReference>
<dbReference type="PROSITE" id="PS00198">
    <property type="entry name" value="4FE4S_FER_1"/>
    <property type="match status" value="2"/>
</dbReference>
<dbReference type="PROSITE" id="PS51379">
    <property type="entry name" value="4FE4S_FER_2"/>
    <property type="match status" value="2"/>
</dbReference>
<proteinExistence type="inferred from homology"/>
<evidence type="ECO:0000255" key="1">
    <source>
        <dbReference type="HAMAP-Rule" id="MF_00461"/>
    </source>
</evidence>
<evidence type="ECO:0000256" key="2">
    <source>
        <dbReference type="SAM" id="MobiDB-lite"/>
    </source>
</evidence>